<sequence length="377" mass="40941">MSVAELKERHMAATQTVNDLREKLKQKRLQLLDTDVSGYAKRQGKSPVTFGPTDLVCCRILQGHTGKVYSLDWTPEKNRIVSASQDGRLIVWNALTSQKTHAIKLPCAWVMTCAFSPSGQSVACGGLDSACSIFNLNSPIDKDGIHPVSRMLSGHKGYVSSCQYVPDEDTHLITSSGDQTCVLWDITTGLRTSVFGGEFQSGHTADVLSVSISSSNPKLFVSGSCDTTARLWDTRVASRAQRTFHGHESDVNTVKFFPDGNRFGTGSDDGSCRLFDIRTGHQLQVYNQPHGDGDIPHVTSMAFSISGRLLFVGYSNGDCYVWDTLLAKVVLNLGSVQNSHEGRISCLGLSADGSALCTGSWDTNLKIWAFGGHRSVV</sequence>
<reference key="1">
    <citation type="submission" date="1997-01" db="EMBL/GenBank/DDBJ databases">
        <authorList>
            <person name="Provart N.J."/>
            <person name="Ma H."/>
            <person name="Willmitzer L."/>
            <person name="Mueller-Roeber B."/>
        </authorList>
    </citation>
    <scope>NUCLEOTIDE SEQUENCE [MRNA]</scope>
    <source>
        <strain>cv. Desiree</strain>
    </source>
</reference>
<gene>
    <name type="primary">GB1</name>
</gene>
<comment type="function">
    <text>Guanine nucleotide-binding proteins (G proteins) are involved as a modulator or transducer in various transmembrane signaling systems. The beta and gamma chains are required for the GTPase activity, for replacement of GDP by GTP, and for G protein-effector interaction.</text>
</comment>
<comment type="subunit">
    <text>G proteins are composed of 3 units, alpha, beta and gamma.</text>
</comment>
<comment type="similarity">
    <text evidence="1">Belongs to the WD repeat G protein beta family.</text>
</comment>
<organism>
    <name type="scientific">Solanum tuberosum</name>
    <name type="common">Potato</name>
    <dbReference type="NCBI Taxonomy" id="4113"/>
    <lineage>
        <taxon>Eukaryota</taxon>
        <taxon>Viridiplantae</taxon>
        <taxon>Streptophyta</taxon>
        <taxon>Embryophyta</taxon>
        <taxon>Tracheophyta</taxon>
        <taxon>Spermatophyta</taxon>
        <taxon>Magnoliopsida</taxon>
        <taxon>eudicotyledons</taxon>
        <taxon>Gunneridae</taxon>
        <taxon>Pentapetalae</taxon>
        <taxon>asterids</taxon>
        <taxon>lamiids</taxon>
        <taxon>Solanales</taxon>
        <taxon>Solanaceae</taxon>
        <taxon>Solanoideae</taxon>
        <taxon>Solaneae</taxon>
        <taxon>Solanum</taxon>
    </lineage>
</organism>
<accession>P93563</accession>
<feature type="chain" id="PRO_0000127726" description="Guanine nucleotide-binding protein subunit beta">
    <location>
        <begin position="1"/>
        <end position="377"/>
    </location>
</feature>
<feature type="repeat" description="WD 1">
    <location>
        <begin position="63"/>
        <end position="93"/>
    </location>
</feature>
<feature type="repeat" description="WD 2">
    <location>
        <begin position="105"/>
        <end position="135"/>
    </location>
</feature>
<feature type="repeat" description="WD 3">
    <location>
        <begin position="154"/>
        <end position="185"/>
    </location>
</feature>
<feature type="repeat" description="WD 4">
    <location>
        <begin position="202"/>
        <end position="233"/>
    </location>
</feature>
<feature type="repeat" description="WD 5">
    <location>
        <begin position="246"/>
        <end position="276"/>
    </location>
</feature>
<feature type="repeat" description="WD 6">
    <location>
        <begin position="293"/>
        <end position="323"/>
    </location>
</feature>
<feature type="repeat" description="WD 7">
    <location>
        <begin position="339"/>
        <end position="369"/>
    </location>
</feature>
<proteinExistence type="evidence at transcript level"/>
<protein>
    <recommendedName>
        <fullName>Guanine nucleotide-binding protein subunit beta</fullName>
    </recommendedName>
</protein>
<evidence type="ECO:0000305" key="1"/>
<name>GBB_SOLTU</name>
<keyword id="KW-1185">Reference proteome</keyword>
<keyword id="KW-0677">Repeat</keyword>
<keyword id="KW-0807">Transducer</keyword>
<keyword id="KW-0853">WD repeat</keyword>
<dbReference type="EMBL" id="X87837">
    <property type="protein sequence ID" value="CAA61106.1"/>
    <property type="molecule type" value="mRNA"/>
</dbReference>
<dbReference type="PIR" id="T07376">
    <property type="entry name" value="T07376"/>
</dbReference>
<dbReference type="SMR" id="P93563"/>
<dbReference type="FunCoup" id="P93563">
    <property type="interactions" value="1833"/>
</dbReference>
<dbReference type="STRING" id="4113.P93563"/>
<dbReference type="PaxDb" id="4113-PGSC0003DMT400001906"/>
<dbReference type="eggNOG" id="KOG0286">
    <property type="taxonomic scope" value="Eukaryota"/>
</dbReference>
<dbReference type="InParanoid" id="P93563"/>
<dbReference type="Proteomes" id="UP000011115">
    <property type="component" value="Unassembled WGS sequence"/>
</dbReference>
<dbReference type="ExpressionAtlas" id="P93563">
    <property type="expression patterns" value="baseline and differential"/>
</dbReference>
<dbReference type="GO" id="GO:0005737">
    <property type="term" value="C:cytoplasm"/>
    <property type="evidence" value="ECO:0000318"/>
    <property type="project" value="GO_Central"/>
</dbReference>
<dbReference type="GO" id="GO:0005834">
    <property type="term" value="C:heterotrimeric G-protein complex"/>
    <property type="evidence" value="ECO:0000318"/>
    <property type="project" value="GO_Central"/>
</dbReference>
<dbReference type="GO" id="GO:0030159">
    <property type="term" value="F:signaling receptor complex adaptor activity"/>
    <property type="evidence" value="ECO:0000318"/>
    <property type="project" value="GO_Central"/>
</dbReference>
<dbReference type="GO" id="GO:0007186">
    <property type="term" value="P:G protein-coupled receptor signaling pathway"/>
    <property type="evidence" value="ECO:0000318"/>
    <property type="project" value="GO_Central"/>
</dbReference>
<dbReference type="CDD" id="cd00200">
    <property type="entry name" value="WD40"/>
    <property type="match status" value="1"/>
</dbReference>
<dbReference type="FunFam" id="2.130.10.10:FF:000580">
    <property type="entry name" value="Guanine nucleotide-binding protein subunit beta"/>
    <property type="match status" value="1"/>
</dbReference>
<dbReference type="Gene3D" id="2.130.10.10">
    <property type="entry name" value="YVTN repeat-like/Quinoprotein amine dehydrogenase"/>
    <property type="match status" value="1"/>
</dbReference>
<dbReference type="InterPro" id="IPR020472">
    <property type="entry name" value="G-protein_beta_WD-40_rep"/>
</dbReference>
<dbReference type="InterPro" id="IPR001632">
    <property type="entry name" value="Gprotein_B"/>
</dbReference>
<dbReference type="InterPro" id="IPR016346">
    <property type="entry name" value="Guanine_nucleotide-bd_bsu"/>
</dbReference>
<dbReference type="InterPro" id="IPR015943">
    <property type="entry name" value="WD40/YVTN_repeat-like_dom_sf"/>
</dbReference>
<dbReference type="InterPro" id="IPR019775">
    <property type="entry name" value="WD40_repeat_CS"/>
</dbReference>
<dbReference type="InterPro" id="IPR036322">
    <property type="entry name" value="WD40_repeat_dom_sf"/>
</dbReference>
<dbReference type="InterPro" id="IPR001680">
    <property type="entry name" value="WD40_rpt"/>
</dbReference>
<dbReference type="PANTHER" id="PTHR19850">
    <property type="entry name" value="GUANINE NUCLEOTIDE-BINDING PROTEIN BETA G PROTEIN BETA"/>
    <property type="match status" value="1"/>
</dbReference>
<dbReference type="Pfam" id="PF25391">
    <property type="entry name" value="WD40_Gbeta"/>
    <property type="match status" value="1"/>
</dbReference>
<dbReference type="PIRSF" id="PIRSF002394">
    <property type="entry name" value="GN-bd_beta"/>
    <property type="match status" value="1"/>
</dbReference>
<dbReference type="PRINTS" id="PR00319">
    <property type="entry name" value="GPROTEINB"/>
</dbReference>
<dbReference type="PRINTS" id="PR00320">
    <property type="entry name" value="GPROTEINBRPT"/>
</dbReference>
<dbReference type="SMART" id="SM00320">
    <property type="entry name" value="WD40"/>
    <property type="match status" value="7"/>
</dbReference>
<dbReference type="SUPFAM" id="SSF50978">
    <property type="entry name" value="WD40 repeat-like"/>
    <property type="match status" value="1"/>
</dbReference>
<dbReference type="PROSITE" id="PS00678">
    <property type="entry name" value="WD_REPEATS_1"/>
    <property type="match status" value="2"/>
</dbReference>
<dbReference type="PROSITE" id="PS50082">
    <property type="entry name" value="WD_REPEATS_2"/>
    <property type="match status" value="5"/>
</dbReference>
<dbReference type="PROSITE" id="PS50294">
    <property type="entry name" value="WD_REPEATS_REGION"/>
    <property type="match status" value="1"/>
</dbReference>